<dbReference type="EC" id="3.1.21.7" evidence="1"/>
<dbReference type="EMBL" id="Z92952">
    <property type="protein sequence ID" value="CAB07450.1"/>
    <property type="molecule type" value="Genomic_DNA"/>
</dbReference>
<dbReference type="EMBL" id="AL009126">
    <property type="protein sequence ID" value="CAB15634.2"/>
    <property type="molecule type" value="Genomic_DNA"/>
</dbReference>
<dbReference type="PIR" id="G70067">
    <property type="entry name" value="G70067"/>
</dbReference>
<dbReference type="RefSeq" id="NP_391498.2">
    <property type="nucleotide sequence ID" value="NC_000964.3"/>
</dbReference>
<dbReference type="RefSeq" id="WP_003243213.1">
    <property type="nucleotide sequence ID" value="NZ_OZ025638.1"/>
</dbReference>
<dbReference type="PDB" id="3GA2">
    <property type="method" value="X-ray"/>
    <property type="resolution" value="2.10 A"/>
    <property type="chains" value="A=1-238"/>
</dbReference>
<dbReference type="PDBsum" id="3GA2"/>
<dbReference type="SMR" id="P96724"/>
<dbReference type="FunCoup" id="P96724">
    <property type="interactions" value="223"/>
</dbReference>
<dbReference type="STRING" id="224308.BSU36170"/>
<dbReference type="PaxDb" id="224308-BSU36170"/>
<dbReference type="EnsemblBacteria" id="CAB15634">
    <property type="protein sequence ID" value="CAB15634"/>
    <property type="gene ID" value="BSU_36170"/>
</dbReference>
<dbReference type="GeneID" id="936894"/>
<dbReference type="KEGG" id="bsu:BSU36170"/>
<dbReference type="PATRIC" id="fig|224308.179.peg.3914"/>
<dbReference type="eggNOG" id="COG1515">
    <property type="taxonomic scope" value="Bacteria"/>
</dbReference>
<dbReference type="InParanoid" id="P96724"/>
<dbReference type="OrthoDB" id="9790916at2"/>
<dbReference type="PhylomeDB" id="P96724"/>
<dbReference type="BioCyc" id="BSUB:BSU36170-MONOMER"/>
<dbReference type="EvolutionaryTrace" id="P96724"/>
<dbReference type="Proteomes" id="UP000001570">
    <property type="component" value="Chromosome"/>
</dbReference>
<dbReference type="GO" id="GO:0005737">
    <property type="term" value="C:cytoplasm"/>
    <property type="evidence" value="ECO:0007669"/>
    <property type="project" value="UniProtKB-SubCell"/>
</dbReference>
<dbReference type="GO" id="GO:0043737">
    <property type="term" value="F:deoxyribonuclease V activity"/>
    <property type="evidence" value="ECO:0000318"/>
    <property type="project" value="GO_Central"/>
</dbReference>
<dbReference type="GO" id="GO:0000287">
    <property type="term" value="F:magnesium ion binding"/>
    <property type="evidence" value="ECO:0007669"/>
    <property type="project" value="UniProtKB-UniRule"/>
</dbReference>
<dbReference type="GO" id="GO:0016891">
    <property type="term" value="F:RNA endonuclease activity, producing 5'-phosphomonoesters"/>
    <property type="evidence" value="ECO:0000318"/>
    <property type="project" value="GO_Central"/>
</dbReference>
<dbReference type="GO" id="GO:0003727">
    <property type="term" value="F:single-stranded RNA binding"/>
    <property type="evidence" value="ECO:0000318"/>
    <property type="project" value="GO_Central"/>
</dbReference>
<dbReference type="GO" id="GO:0006281">
    <property type="term" value="P:DNA repair"/>
    <property type="evidence" value="ECO:0007669"/>
    <property type="project" value="UniProtKB-UniRule"/>
</dbReference>
<dbReference type="CDD" id="cd06559">
    <property type="entry name" value="Endonuclease_V"/>
    <property type="match status" value="1"/>
</dbReference>
<dbReference type="Gene3D" id="3.30.2170.10">
    <property type="entry name" value="archaeoglobus fulgidus dsm 4304 superfamily"/>
    <property type="match status" value="1"/>
</dbReference>
<dbReference type="HAMAP" id="MF_00801">
    <property type="entry name" value="Endonuclease_5"/>
    <property type="match status" value="1"/>
</dbReference>
<dbReference type="InterPro" id="IPR007581">
    <property type="entry name" value="Endonuclease-V"/>
</dbReference>
<dbReference type="PANTHER" id="PTHR28511">
    <property type="entry name" value="ENDONUCLEASE V"/>
    <property type="match status" value="1"/>
</dbReference>
<dbReference type="PANTHER" id="PTHR28511:SF1">
    <property type="entry name" value="ENDONUCLEASE V"/>
    <property type="match status" value="1"/>
</dbReference>
<dbReference type="Pfam" id="PF04493">
    <property type="entry name" value="Endonuclease_5"/>
    <property type="match status" value="1"/>
</dbReference>
<comment type="function">
    <text evidence="1">DNA repair enzyme involved in the repair of deaminated bases. Selectively cleaves double-stranded DNA at the second phosphodiester bond 3' to a deoxyinosine leaving behind the intact lesion on the nicked DNA.</text>
</comment>
<comment type="catalytic activity">
    <reaction evidence="1">
        <text>Endonucleolytic cleavage at apurinic or apyrimidinic sites to products with a 5'-phosphate.</text>
        <dbReference type="EC" id="3.1.21.7"/>
    </reaction>
</comment>
<comment type="cofactor">
    <cofactor evidence="1">
        <name>Mg(2+)</name>
        <dbReference type="ChEBI" id="CHEBI:18420"/>
    </cofactor>
</comment>
<comment type="subcellular location">
    <subcellularLocation>
        <location evidence="1">Cytoplasm</location>
    </subcellularLocation>
</comment>
<comment type="disruption phenotype">
    <text evidence="2">Deletion of the ywqH-ywqI-ywqJ-ywqK-nfi operon has no visible phenotype, however it is out-competed by wild-type cells.</text>
</comment>
<comment type="similarity">
    <text evidence="1">Belongs to the endonuclease V family.</text>
</comment>
<evidence type="ECO:0000255" key="1">
    <source>
        <dbReference type="HAMAP-Rule" id="MF_00801"/>
    </source>
</evidence>
<evidence type="ECO:0000269" key="2">
    <source>
    </source>
</evidence>
<evidence type="ECO:0000305" key="3"/>
<evidence type="ECO:0007829" key="4">
    <source>
        <dbReference type="PDB" id="3GA2"/>
    </source>
</evidence>
<keyword id="KW-0002">3D-structure</keyword>
<keyword id="KW-0963">Cytoplasm</keyword>
<keyword id="KW-0227">DNA damage</keyword>
<keyword id="KW-0234">DNA repair</keyword>
<keyword id="KW-0255">Endonuclease</keyword>
<keyword id="KW-0378">Hydrolase</keyword>
<keyword id="KW-0460">Magnesium</keyword>
<keyword id="KW-0479">Metal-binding</keyword>
<keyword id="KW-0540">Nuclease</keyword>
<keyword id="KW-1185">Reference proteome</keyword>
<feature type="chain" id="PRO_0000159658" description="Endonuclease V">
    <location>
        <begin position="1"/>
        <end position="238"/>
    </location>
</feature>
<feature type="binding site" evidence="1">
    <location>
        <position position="46"/>
    </location>
    <ligand>
        <name>Mg(2+)</name>
        <dbReference type="ChEBI" id="CHEBI:18420"/>
    </ligand>
</feature>
<feature type="binding site" evidence="1">
    <location>
        <position position="116"/>
    </location>
    <ligand>
        <name>Mg(2+)</name>
        <dbReference type="ChEBI" id="CHEBI:18420"/>
    </ligand>
</feature>
<feature type="site" description="Interaction with target DNA" evidence="1">
    <location>
        <position position="86"/>
    </location>
</feature>
<feature type="sequence conflict" description="In Ref. 1; CAB07450." evidence="3" ref="1">
    <original>C</original>
    <variation>G</variation>
    <location>
        <position position="42"/>
    </location>
</feature>
<feature type="helix" evidence="4">
    <location>
        <begin position="14"/>
        <end position="25"/>
    </location>
</feature>
<feature type="helix" evidence="4">
    <location>
        <begin position="36"/>
        <end position="38"/>
    </location>
</feature>
<feature type="strand" evidence="4">
    <location>
        <begin position="40"/>
        <end position="52"/>
    </location>
</feature>
<feature type="strand" evidence="4">
    <location>
        <begin position="55"/>
        <end position="66"/>
    </location>
</feature>
<feature type="turn" evidence="4">
    <location>
        <begin position="67"/>
        <end position="69"/>
    </location>
</feature>
<feature type="strand" evidence="4">
    <location>
        <begin position="72"/>
        <end position="81"/>
    </location>
</feature>
<feature type="strand" evidence="4">
    <location>
        <begin position="86"/>
        <end position="89"/>
    </location>
</feature>
<feature type="helix" evidence="4">
    <location>
        <begin position="91"/>
        <end position="94"/>
    </location>
</feature>
<feature type="helix" evidence="4">
    <location>
        <begin position="96"/>
        <end position="105"/>
    </location>
</feature>
<feature type="strand" evidence="4">
    <location>
        <begin position="113"/>
        <end position="117"/>
    </location>
</feature>
<feature type="strand" evidence="4">
    <location>
        <begin position="119"/>
        <end position="122"/>
    </location>
</feature>
<feature type="helix" evidence="4">
    <location>
        <begin position="128"/>
        <end position="136"/>
    </location>
</feature>
<feature type="strand" evidence="4">
    <location>
        <begin position="140"/>
        <end position="146"/>
    </location>
</feature>
<feature type="strand" evidence="4">
    <location>
        <begin position="165"/>
        <end position="170"/>
    </location>
</feature>
<feature type="strand" evidence="4">
    <location>
        <begin position="173"/>
        <end position="179"/>
    </location>
</feature>
<feature type="strand" evidence="4">
    <location>
        <begin position="188"/>
        <end position="196"/>
    </location>
</feature>
<feature type="helix" evidence="4">
    <location>
        <begin position="198"/>
        <end position="207"/>
    </location>
</feature>
<feature type="helix" evidence="4">
    <location>
        <begin position="217"/>
        <end position="235"/>
    </location>
</feature>
<reference key="1">
    <citation type="journal article" date="1997" name="Microbiology">
        <title>The Bacillus subtilis genome from gerBC (311 degrees) to licR (334 degrees).</title>
        <authorList>
            <person name="Presecan E."/>
            <person name="Moszer I."/>
            <person name="Boursier L."/>
            <person name="Cruz Ramos H."/>
            <person name="De La Fuente V."/>
            <person name="Hullo M.-F."/>
            <person name="Lelong C."/>
            <person name="Schleich S."/>
            <person name="Sekowska A."/>
            <person name="Song B.H."/>
            <person name="Villani G."/>
            <person name="Kunst F."/>
            <person name="Danchin A."/>
            <person name="Glaser P."/>
        </authorList>
    </citation>
    <scope>NUCLEOTIDE SEQUENCE [GENOMIC DNA]</scope>
    <source>
        <strain>168</strain>
    </source>
</reference>
<reference key="2">
    <citation type="journal article" date="1997" name="Nature">
        <title>The complete genome sequence of the Gram-positive bacterium Bacillus subtilis.</title>
        <authorList>
            <person name="Kunst F."/>
            <person name="Ogasawara N."/>
            <person name="Moszer I."/>
            <person name="Albertini A.M."/>
            <person name="Alloni G."/>
            <person name="Azevedo V."/>
            <person name="Bertero M.G."/>
            <person name="Bessieres P."/>
            <person name="Bolotin A."/>
            <person name="Borchert S."/>
            <person name="Borriss R."/>
            <person name="Boursier L."/>
            <person name="Brans A."/>
            <person name="Braun M."/>
            <person name="Brignell S.C."/>
            <person name="Bron S."/>
            <person name="Brouillet S."/>
            <person name="Bruschi C.V."/>
            <person name="Caldwell B."/>
            <person name="Capuano V."/>
            <person name="Carter N.M."/>
            <person name="Choi S.-K."/>
            <person name="Codani J.-J."/>
            <person name="Connerton I.F."/>
            <person name="Cummings N.J."/>
            <person name="Daniel R.A."/>
            <person name="Denizot F."/>
            <person name="Devine K.M."/>
            <person name="Duesterhoeft A."/>
            <person name="Ehrlich S.D."/>
            <person name="Emmerson P.T."/>
            <person name="Entian K.-D."/>
            <person name="Errington J."/>
            <person name="Fabret C."/>
            <person name="Ferrari E."/>
            <person name="Foulger D."/>
            <person name="Fritz C."/>
            <person name="Fujita M."/>
            <person name="Fujita Y."/>
            <person name="Fuma S."/>
            <person name="Galizzi A."/>
            <person name="Galleron N."/>
            <person name="Ghim S.-Y."/>
            <person name="Glaser P."/>
            <person name="Goffeau A."/>
            <person name="Golightly E.J."/>
            <person name="Grandi G."/>
            <person name="Guiseppi G."/>
            <person name="Guy B.J."/>
            <person name="Haga K."/>
            <person name="Haiech J."/>
            <person name="Harwood C.R."/>
            <person name="Henaut A."/>
            <person name="Hilbert H."/>
            <person name="Holsappel S."/>
            <person name="Hosono S."/>
            <person name="Hullo M.-F."/>
            <person name="Itaya M."/>
            <person name="Jones L.-M."/>
            <person name="Joris B."/>
            <person name="Karamata D."/>
            <person name="Kasahara Y."/>
            <person name="Klaerr-Blanchard M."/>
            <person name="Klein C."/>
            <person name="Kobayashi Y."/>
            <person name="Koetter P."/>
            <person name="Koningstein G."/>
            <person name="Krogh S."/>
            <person name="Kumano M."/>
            <person name="Kurita K."/>
            <person name="Lapidus A."/>
            <person name="Lardinois S."/>
            <person name="Lauber J."/>
            <person name="Lazarevic V."/>
            <person name="Lee S.-M."/>
            <person name="Levine A."/>
            <person name="Liu H."/>
            <person name="Masuda S."/>
            <person name="Mauel C."/>
            <person name="Medigue C."/>
            <person name="Medina N."/>
            <person name="Mellado R.P."/>
            <person name="Mizuno M."/>
            <person name="Moestl D."/>
            <person name="Nakai S."/>
            <person name="Noback M."/>
            <person name="Noone D."/>
            <person name="O'Reilly M."/>
            <person name="Ogawa K."/>
            <person name="Ogiwara A."/>
            <person name="Oudega B."/>
            <person name="Park S.-H."/>
            <person name="Parro V."/>
            <person name="Pohl T.M."/>
            <person name="Portetelle D."/>
            <person name="Porwollik S."/>
            <person name="Prescott A.M."/>
            <person name="Presecan E."/>
            <person name="Pujic P."/>
            <person name="Purnelle B."/>
            <person name="Rapoport G."/>
            <person name="Rey M."/>
            <person name="Reynolds S."/>
            <person name="Rieger M."/>
            <person name="Rivolta C."/>
            <person name="Rocha E."/>
            <person name="Roche B."/>
            <person name="Rose M."/>
            <person name="Sadaie Y."/>
            <person name="Sato T."/>
            <person name="Scanlan E."/>
            <person name="Schleich S."/>
            <person name="Schroeter R."/>
            <person name="Scoffone F."/>
            <person name="Sekiguchi J."/>
            <person name="Sekowska A."/>
            <person name="Seror S.J."/>
            <person name="Serror P."/>
            <person name="Shin B.-S."/>
            <person name="Soldo B."/>
            <person name="Sorokin A."/>
            <person name="Tacconi E."/>
            <person name="Takagi T."/>
            <person name="Takahashi H."/>
            <person name="Takemaru K."/>
            <person name="Takeuchi M."/>
            <person name="Tamakoshi A."/>
            <person name="Tanaka T."/>
            <person name="Terpstra P."/>
            <person name="Tognoni A."/>
            <person name="Tosato V."/>
            <person name="Uchiyama S."/>
            <person name="Vandenbol M."/>
            <person name="Vannier F."/>
            <person name="Vassarotti A."/>
            <person name="Viari A."/>
            <person name="Wambutt R."/>
            <person name="Wedler E."/>
            <person name="Wedler H."/>
            <person name="Weitzenegger T."/>
            <person name="Winters P."/>
            <person name="Wipat A."/>
            <person name="Yamamoto H."/>
            <person name="Yamane K."/>
            <person name="Yasumoto K."/>
            <person name="Yata K."/>
            <person name="Yoshida K."/>
            <person name="Yoshikawa H.-F."/>
            <person name="Zumstein E."/>
            <person name="Yoshikawa H."/>
            <person name="Danchin A."/>
        </authorList>
    </citation>
    <scope>NUCLEOTIDE SEQUENCE [LARGE SCALE GENOMIC DNA]</scope>
    <source>
        <strain>168</strain>
    </source>
</reference>
<reference key="3">
    <citation type="journal article" date="2009" name="Microbiology">
        <title>From a consortium sequence to a unified sequence: the Bacillus subtilis 168 reference genome a decade later.</title>
        <authorList>
            <person name="Barbe V."/>
            <person name="Cruveiller S."/>
            <person name="Kunst F."/>
            <person name="Lenoble P."/>
            <person name="Meurice G."/>
            <person name="Sekowska A."/>
            <person name="Vallenet D."/>
            <person name="Wang T."/>
            <person name="Moszer I."/>
            <person name="Medigue C."/>
            <person name="Danchin A."/>
        </authorList>
    </citation>
    <scope>SEQUENCE REVISION TO 42</scope>
</reference>
<reference key="4">
    <citation type="journal article" date="2021" name="PLoS Genet.">
        <title>Diverse LXG toxin and antitoxin systems specifically mediate intraspecies competition in Bacillus subtilis biofilms.</title>
        <authorList>
            <person name="Kobayashi K."/>
        </authorList>
    </citation>
    <scope>DISRUPTION PHENOTYPE</scope>
    <source>
        <strain>168 / Marburg / ATCC 6051 / DSM 10 / JCM 1465 / NBRC 13719 / NCIMB 3610 / NRRL NRS-744 / VKM B-501</strain>
    </source>
</reference>
<reference key="5">
    <citation type="submission" date="2009-02" db="PDB data bank">
        <title>Crystal structure of the endonuclease V (BSU36170) from Bacillus subtilis, Northeast structural genomics consortium target SR624.</title>
        <authorList>
            <consortium name="Northeast structural genomics consortium (NESG)"/>
        </authorList>
    </citation>
    <scope>X-RAY CRYSTALLOGRAPHY (2.1 ANGSTROMS)</scope>
</reference>
<accession>P96724</accession>
<accession>Q795B8</accession>
<sequence>MKVFDVHKFDMKKEQDFLQVQFNLKNRINLSPTIHPDSINTCAGVDLAYWEQDGEPYGVCCIIVIDADTKEVIEKVHSMGRISVPYVSGFLAFRELPLIIEAAKKLETEPDVFLFDGNGYLHYNHMGVATHAAFFLGKPTIGIAKTYLKIKGCDFVTPEIEVGAYTDIIIDGEVYGRALRTRRDVKPIFLSCGNYIDLDSSYQITMSLINQESRLPIPVRLADLETHVLRTFYQKNHV</sequence>
<name>NFI_BACSU</name>
<gene>
    <name evidence="1" type="primary">nfi</name>
    <name type="synonym">ywqL</name>
    <name type="ordered locus">BSU36170</name>
</gene>
<protein>
    <recommendedName>
        <fullName evidence="1">Endonuclease V</fullName>
        <ecNumber evidence="1">3.1.21.7</ecNumber>
    </recommendedName>
    <alternativeName>
        <fullName evidence="1">Deoxyinosine 3'endonuclease</fullName>
    </alternativeName>
    <alternativeName>
        <fullName evidence="1">Deoxyribonuclease V</fullName>
        <shortName evidence="1">DNase V</shortName>
    </alternativeName>
</protein>
<organism>
    <name type="scientific">Bacillus subtilis (strain 168)</name>
    <dbReference type="NCBI Taxonomy" id="224308"/>
    <lineage>
        <taxon>Bacteria</taxon>
        <taxon>Bacillati</taxon>
        <taxon>Bacillota</taxon>
        <taxon>Bacilli</taxon>
        <taxon>Bacillales</taxon>
        <taxon>Bacillaceae</taxon>
        <taxon>Bacillus</taxon>
    </lineage>
</organism>
<proteinExistence type="evidence at protein level"/>